<accession>O35736</accession>
<comment type="function">
    <text evidence="2">Cytokine with a wide variety of biological functions in immunity, tissue regeneration, and metabolism. Binds to IL6R, then the complex associates to the signaling subunit IL6ST/gp130 to trigger the intracellular IL6-signaling pathway. The interaction with the membrane-bound IL6R and IL6ST stimulates 'classic signaling', whereas the binding of IL6 and soluble IL6R to IL6ST stimulates 'trans-signaling'. Alternatively, 'cluster signaling' occurs when membrane-bound IL6:IL6R complexes on transmitter cells activate IL6ST receptors on neighboring receiver cells.</text>
</comment>
<comment type="function">
    <text evidence="2 3">IL6 is a potent inducer of the acute phase response. Rapid production of IL6 contributes to host defense during infection and tissue injury, but excessive IL6 synthesis is involved in disease pathology. In the innate immune response, is synthesized by myeloid cells, such as macrophages and dendritic cells, upon recognition of pathogens through toll-like receptors (TLRs) at the site of infection or tissue injury (By similarity). In the adaptive immune response, is required for the differentiation of B cells into immunoglobulin-secreting cells. Plays a major role in the differentiation of CD4(+) T cell subsets. Essential factor for the development of T follicular helper (Tfh) cells that are required for the induction of germinal-center formation. Required to drive naive CD4(+) T cells to the Th17 lineage. Also required for proliferation of myeloma cells and the survival of plasmablast cells (By similarity).</text>
</comment>
<comment type="function">
    <text evidence="2 3">Acts as an essential factor in bone homeostasis and on vessels directly or indirectly by induction of VEGF, resulting in increased angiogenesis activity and vascular permeability. Induces, through 'trans-signaling' and synergistically with IL1B and TNF, the production of VEGF. Involved in metabolic controls, is discharged into the bloodstream after muscle contraction increasing lipolysis and improving insulin resistance (By similarity). 'Trans-signaling' in central nervous system also regulates energy and glucose homeostasis. Mediates, through GLP-1, crosstalk between insulin-sensitive tissues, intestinal L cells and pancreatic islets to adapt to changes in insulin demand (By similarity). Also acts as a myokine (By similarity). Plays a protective role during liver injury, being required for maintenance of tissue regeneration (By similarity). Also has a pivotal role in iron metabolism by regulating HAMP/hepcidin expression upon inflammation or bacterial infection (By similarity). Through activation of IL6ST-YAP-NOTCH pathway, induces inflammation-induced epithelial regeneration (By similarity).</text>
</comment>
<comment type="subunit">
    <text evidence="2">Component of a hexamer of two molecules each of IL6, IL6R and IL6ST; first binds to IL6R to associate with the signaling subunit IL6ST. Interacts with IL6R (via the N-terminal ectodomain); this interaction may be affected by IL6R-binding with SORL1, hence decreasing IL6 cis signaling. Interacts with SORL1 (via the N-terminal ectodomain); this interaction leads to IL6 internalization and lysosomal degradation. May form a trimeric complex with the soluble SORL1 ectodomain and soluble IL6R receptor; this interaction might stabilize circulating IL6, hence promoting IL6 trans signaling.</text>
</comment>
<comment type="subcellular location">
    <subcellularLocation>
        <location evidence="2">Secreted</location>
    </subcellularLocation>
</comment>
<comment type="similarity">
    <text evidence="6">Belongs to the IL-6 superfamily.</text>
</comment>
<organism>
    <name type="scientific">Marmota monax</name>
    <name type="common">Woodchuck</name>
    <dbReference type="NCBI Taxonomy" id="9995"/>
    <lineage>
        <taxon>Eukaryota</taxon>
        <taxon>Metazoa</taxon>
        <taxon>Chordata</taxon>
        <taxon>Craniata</taxon>
        <taxon>Vertebrata</taxon>
        <taxon>Euteleostomi</taxon>
        <taxon>Mammalia</taxon>
        <taxon>Eutheria</taxon>
        <taxon>Euarchontoglires</taxon>
        <taxon>Glires</taxon>
        <taxon>Rodentia</taxon>
        <taxon>Sciuromorpha</taxon>
        <taxon>Sciuridae</taxon>
        <taxon>Xerinae</taxon>
        <taxon>Marmotini</taxon>
        <taxon>Marmota</taxon>
    </lineage>
</organism>
<keyword id="KW-0011">Acute phase</keyword>
<keyword id="KW-0202">Cytokine</keyword>
<keyword id="KW-1015">Disulfide bond</keyword>
<keyword id="KW-0339">Growth factor</keyword>
<keyword id="KW-0597">Phosphoprotein</keyword>
<keyword id="KW-0964">Secreted</keyword>
<keyword id="KW-0732">Signal</keyword>
<protein>
    <recommendedName>
        <fullName>Interleukin-6</fullName>
        <shortName>IL-6</shortName>
    </recommendedName>
</protein>
<evidence type="ECO:0000250" key="1"/>
<evidence type="ECO:0000250" key="2">
    <source>
        <dbReference type="UniProtKB" id="P05231"/>
    </source>
</evidence>
<evidence type="ECO:0000250" key="3">
    <source>
        <dbReference type="UniProtKB" id="P08505"/>
    </source>
</evidence>
<evidence type="ECO:0000255" key="4"/>
<evidence type="ECO:0000256" key="5">
    <source>
        <dbReference type="SAM" id="MobiDB-lite"/>
    </source>
</evidence>
<evidence type="ECO:0000305" key="6"/>
<proteinExistence type="evidence at transcript level"/>
<name>IL6_MARMO</name>
<feature type="signal peptide" evidence="4">
    <location>
        <begin position="1"/>
        <end position="18"/>
    </location>
</feature>
<feature type="chain" id="PRO_0000015587" description="Interleukin-6">
    <location>
        <begin position="19"/>
        <end position="207"/>
    </location>
</feature>
<feature type="region of interest" description="Disordered" evidence="5">
    <location>
        <begin position="26"/>
        <end position="47"/>
    </location>
</feature>
<feature type="compositionally biased region" description="Polar residues" evidence="5">
    <location>
        <begin position="31"/>
        <end position="44"/>
    </location>
</feature>
<feature type="modified residue" description="Phosphoserine" evidence="2">
    <location>
        <position position="74"/>
    </location>
</feature>
<feature type="disulfide bond" evidence="1">
    <location>
        <begin position="65"/>
        <end position="71"/>
    </location>
</feature>
<feature type="disulfide bond" evidence="1">
    <location>
        <begin position="94"/>
        <end position="104"/>
    </location>
</feature>
<reference key="1">
    <citation type="journal article" date="1998" name="Immunogenetics">
        <title>Molecular cloning of the woodchuck cytokines: TNF-alpha, IFN-gamma, and IL-6.</title>
        <authorList>
            <person name="Lohrengel B."/>
            <person name="Lu M."/>
            <person name="Roggendorf M."/>
        </authorList>
    </citation>
    <scope>NUCLEOTIDE SEQUENCE [MRNA]</scope>
    <source>
        <tissue>Peripheral blood</tissue>
    </source>
</reference>
<dbReference type="EMBL" id="Y14139">
    <property type="protein sequence ID" value="CAA74571.1"/>
    <property type="molecule type" value="mRNA"/>
</dbReference>
<dbReference type="SMR" id="O35736"/>
<dbReference type="GO" id="GO:0005615">
    <property type="term" value="C:extracellular space"/>
    <property type="evidence" value="ECO:0007669"/>
    <property type="project" value="UniProtKB-KW"/>
</dbReference>
<dbReference type="GO" id="GO:0005896">
    <property type="term" value="C:interleukin-6 receptor complex"/>
    <property type="evidence" value="ECO:0007669"/>
    <property type="project" value="TreeGrafter"/>
</dbReference>
<dbReference type="GO" id="GO:0005125">
    <property type="term" value="F:cytokine activity"/>
    <property type="evidence" value="ECO:0007669"/>
    <property type="project" value="UniProtKB-KW"/>
</dbReference>
<dbReference type="GO" id="GO:0008083">
    <property type="term" value="F:growth factor activity"/>
    <property type="evidence" value="ECO:0007669"/>
    <property type="project" value="UniProtKB-KW"/>
</dbReference>
<dbReference type="GO" id="GO:0005138">
    <property type="term" value="F:interleukin-6 receptor binding"/>
    <property type="evidence" value="ECO:0007669"/>
    <property type="project" value="InterPro"/>
</dbReference>
<dbReference type="GO" id="GO:0006953">
    <property type="term" value="P:acute-phase response"/>
    <property type="evidence" value="ECO:0007669"/>
    <property type="project" value="UniProtKB-KW"/>
</dbReference>
<dbReference type="GO" id="GO:0042593">
    <property type="term" value="P:glucose homeostasis"/>
    <property type="evidence" value="ECO:0000250"/>
    <property type="project" value="UniProtKB"/>
</dbReference>
<dbReference type="GO" id="GO:0072574">
    <property type="term" value="P:hepatocyte proliferation"/>
    <property type="evidence" value="ECO:0000250"/>
    <property type="project" value="UniProtKB"/>
</dbReference>
<dbReference type="GO" id="GO:0070102">
    <property type="term" value="P:interleukin-6-mediated signaling pathway"/>
    <property type="evidence" value="ECO:0000250"/>
    <property type="project" value="UniProtKB"/>
</dbReference>
<dbReference type="GO" id="GO:0097421">
    <property type="term" value="P:liver regeneration"/>
    <property type="evidence" value="ECO:0000250"/>
    <property type="project" value="UniProtKB"/>
</dbReference>
<dbReference type="GO" id="GO:0051240">
    <property type="term" value="P:positive regulation of multicellular organismal process"/>
    <property type="evidence" value="ECO:0007669"/>
    <property type="project" value="UniProtKB-ARBA"/>
</dbReference>
<dbReference type="GO" id="GO:0046427">
    <property type="term" value="P:positive regulation of receptor signaling pathway via JAK-STAT"/>
    <property type="evidence" value="ECO:0007669"/>
    <property type="project" value="TreeGrafter"/>
</dbReference>
<dbReference type="GO" id="GO:1904894">
    <property type="term" value="P:positive regulation of receptor signaling pathway via STAT"/>
    <property type="evidence" value="ECO:0000250"/>
    <property type="project" value="UniProtKB"/>
</dbReference>
<dbReference type="GO" id="GO:0070092">
    <property type="term" value="P:regulation of glucagon secretion"/>
    <property type="evidence" value="ECO:0000250"/>
    <property type="project" value="UniProtKB"/>
</dbReference>
<dbReference type="GO" id="GO:0050796">
    <property type="term" value="P:regulation of insulin secretion"/>
    <property type="evidence" value="ECO:0000250"/>
    <property type="project" value="UniProtKB"/>
</dbReference>
<dbReference type="GO" id="GO:0014823">
    <property type="term" value="P:response to activity"/>
    <property type="evidence" value="ECO:0000250"/>
    <property type="project" value="UniProtKB"/>
</dbReference>
<dbReference type="GO" id="GO:0072540">
    <property type="term" value="P:T-helper 17 cell lineage commitment"/>
    <property type="evidence" value="ECO:0000250"/>
    <property type="project" value="UniProtKB"/>
</dbReference>
<dbReference type="GO" id="GO:0010573">
    <property type="term" value="P:vascular endothelial growth factor production"/>
    <property type="evidence" value="ECO:0000250"/>
    <property type="project" value="UniProtKB"/>
</dbReference>
<dbReference type="FunFam" id="1.20.1250.10:FF:000006">
    <property type="entry name" value="Interleukin-6"/>
    <property type="match status" value="1"/>
</dbReference>
<dbReference type="Gene3D" id="1.20.1250.10">
    <property type="match status" value="1"/>
</dbReference>
<dbReference type="InterPro" id="IPR009079">
    <property type="entry name" value="4_helix_cytokine-like_core"/>
</dbReference>
<dbReference type="InterPro" id="IPR003574">
    <property type="entry name" value="IL-6-like"/>
</dbReference>
<dbReference type="InterPro" id="IPR030474">
    <property type="entry name" value="IL-6/GCSF/MGF"/>
</dbReference>
<dbReference type="InterPro" id="IPR030473">
    <property type="entry name" value="IL6/GCSF/MGF_CS"/>
</dbReference>
<dbReference type="PANTHER" id="PTHR48494">
    <property type="entry name" value="INTERLEUKIN-6"/>
    <property type="match status" value="1"/>
</dbReference>
<dbReference type="PANTHER" id="PTHR48494:SF1">
    <property type="entry name" value="INTERLEUKIN-6"/>
    <property type="match status" value="1"/>
</dbReference>
<dbReference type="Pfam" id="PF00489">
    <property type="entry name" value="IL6"/>
    <property type="match status" value="1"/>
</dbReference>
<dbReference type="PIRSF" id="PIRSF001935">
    <property type="entry name" value="IL6_MGF_GCSF"/>
    <property type="match status" value="1"/>
</dbReference>
<dbReference type="PRINTS" id="PR00433">
    <property type="entry name" value="IL6GCSFMGF"/>
</dbReference>
<dbReference type="PRINTS" id="PR00434">
    <property type="entry name" value="INTERLEUKIN6"/>
</dbReference>
<dbReference type="SMART" id="SM00126">
    <property type="entry name" value="IL6"/>
    <property type="match status" value="1"/>
</dbReference>
<dbReference type="SUPFAM" id="SSF47266">
    <property type="entry name" value="4-helical cytokines"/>
    <property type="match status" value="1"/>
</dbReference>
<dbReference type="PROSITE" id="PS00254">
    <property type="entry name" value="INTERLEUKIN_6"/>
    <property type="match status" value="1"/>
</dbReference>
<gene>
    <name type="primary">IL6</name>
</gene>
<sequence>MKFFSIASLGLLLVVATAFPASELQREDGENSVTRNKPTRASSGKTRRQISYLIKEVFEMRKELCKNDETCIKSHVAVSENNLNLPKMTEKDGCFQTGYNRDDCLVRITSGLLEFQVYLRYIRNKFQEGNNRDRAEHVQSSSKALIEILKQEVKDPNKIVFPSPTANINLLAKLESQNDWQKVMTMQLILSNFEDFLQFTLRAVRKA</sequence>